<comment type="function">
    <text evidence="1">Catalyzes the attachment of L-aspartate to tRNA(Asp) in a two-step reaction: L-aspartate is first activated by ATP to form Asp-AMP and then transferred to the acceptor end of tRNA(Asp).</text>
</comment>
<comment type="catalytic activity">
    <reaction evidence="1">
        <text>tRNA(Asp) + L-aspartate + ATP = L-aspartyl-tRNA(Asp) + AMP + diphosphate</text>
        <dbReference type="Rhea" id="RHEA:19649"/>
        <dbReference type="Rhea" id="RHEA-COMP:9660"/>
        <dbReference type="Rhea" id="RHEA-COMP:9678"/>
        <dbReference type="ChEBI" id="CHEBI:29991"/>
        <dbReference type="ChEBI" id="CHEBI:30616"/>
        <dbReference type="ChEBI" id="CHEBI:33019"/>
        <dbReference type="ChEBI" id="CHEBI:78442"/>
        <dbReference type="ChEBI" id="CHEBI:78516"/>
        <dbReference type="ChEBI" id="CHEBI:456215"/>
        <dbReference type="EC" id="6.1.1.12"/>
    </reaction>
</comment>
<comment type="subunit">
    <text evidence="1">Homodimer.</text>
</comment>
<comment type="subcellular location">
    <subcellularLocation>
        <location evidence="1">Cytoplasm</location>
    </subcellularLocation>
</comment>
<comment type="similarity">
    <text evidence="1">Belongs to the class-II aminoacyl-tRNA synthetase family. Type 1 subfamily.</text>
</comment>
<keyword id="KW-0030">Aminoacyl-tRNA synthetase</keyword>
<keyword id="KW-0067">ATP-binding</keyword>
<keyword id="KW-0963">Cytoplasm</keyword>
<keyword id="KW-0436">Ligase</keyword>
<keyword id="KW-0547">Nucleotide-binding</keyword>
<keyword id="KW-0648">Protein biosynthesis</keyword>
<keyword id="KW-1185">Reference proteome</keyword>
<name>SYD_STRMK</name>
<accession>B2FRP1</accession>
<feature type="chain" id="PRO_1000091048" description="Aspartate--tRNA ligase">
    <location>
        <begin position="1"/>
        <end position="583"/>
    </location>
</feature>
<feature type="region of interest" description="Aspartate" evidence="1">
    <location>
        <begin position="193"/>
        <end position="196"/>
    </location>
</feature>
<feature type="binding site" evidence="1">
    <location>
        <position position="169"/>
    </location>
    <ligand>
        <name>L-aspartate</name>
        <dbReference type="ChEBI" id="CHEBI:29991"/>
    </ligand>
</feature>
<feature type="binding site" evidence="1">
    <location>
        <begin position="215"/>
        <end position="217"/>
    </location>
    <ligand>
        <name>ATP</name>
        <dbReference type="ChEBI" id="CHEBI:30616"/>
    </ligand>
</feature>
<feature type="binding site" evidence="1">
    <location>
        <position position="215"/>
    </location>
    <ligand>
        <name>L-aspartate</name>
        <dbReference type="ChEBI" id="CHEBI:29991"/>
    </ligand>
</feature>
<feature type="binding site" evidence="1">
    <location>
        <position position="224"/>
    </location>
    <ligand>
        <name>ATP</name>
        <dbReference type="ChEBI" id="CHEBI:30616"/>
    </ligand>
</feature>
<feature type="binding site" evidence="1">
    <location>
        <position position="443"/>
    </location>
    <ligand>
        <name>L-aspartate</name>
        <dbReference type="ChEBI" id="CHEBI:29991"/>
    </ligand>
</feature>
<feature type="binding site" evidence="1">
    <location>
        <position position="477"/>
    </location>
    <ligand>
        <name>ATP</name>
        <dbReference type="ChEBI" id="CHEBI:30616"/>
    </ligand>
</feature>
<feature type="binding site" evidence="1">
    <location>
        <position position="484"/>
    </location>
    <ligand>
        <name>L-aspartate</name>
        <dbReference type="ChEBI" id="CHEBI:29991"/>
    </ligand>
</feature>
<feature type="binding site" evidence="1">
    <location>
        <begin position="529"/>
        <end position="532"/>
    </location>
    <ligand>
        <name>ATP</name>
        <dbReference type="ChEBI" id="CHEBI:30616"/>
    </ligand>
</feature>
<sequence length="583" mass="64554">MRTHFCGLVDETLIGQTVTLAGWTDVARNQGGVCFIDLRDHEGIVQVTVEVDNAEVFAVAASLGYEDVLQVEGVVRARHAVNDKMRTGKVEVIATAITVLNKAAPLPFHAHENPGEETRLKYRYLDLRRPEMQRMQRTRIKLVQALRRHLDEKGFQDIETPILTKATPEGARDFLVPARMHPGEFYALPQSPQLFKQILMVAGFDRYYQIARCFRDEALRADRQLEFTQLDMEFAFVRERDVQDFVEDMIRAIFKEVVDVQLDASFPRMTWAEAMRRYGSDKPDLRIALELVDVAELVKDSEFPVFTGPANDAEGRVAALRIPGGASLSRKQIDEYAAHAAKYGAKGLAYIKIADNGEISSPIQKFFSEASFAALVAHVGAGNGDIVFFGAGGYNKVSDFMGALRLKAGKDFGLVADGWAPLWVTDFPMFEWDEEEQRYVALHHPFTAPAVDDIADLRANARTAVSRGYDMVLNGNEIGGGSIRIHRPDMQSAVFELLGIGAEEARAKFGFLLDALNYGAPPHGGIAFGIDRIAALMAGTESIRDVIPFPKTTGAQDLMTDAPSPIVDAQLAEVHIQVRPKTN</sequence>
<evidence type="ECO:0000255" key="1">
    <source>
        <dbReference type="HAMAP-Rule" id="MF_00044"/>
    </source>
</evidence>
<protein>
    <recommendedName>
        <fullName evidence="1">Aspartate--tRNA ligase</fullName>
        <ecNumber evidence="1">6.1.1.12</ecNumber>
    </recommendedName>
    <alternativeName>
        <fullName evidence="1">Aspartyl-tRNA synthetase</fullName>
        <shortName evidence="1">AspRS</shortName>
    </alternativeName>
</protein>
<reference key="1">
    <citation type="journal article" date="2008" name="Genome Biol.">
        <title>The complete genome, comparative and functional analysis of Stenotrophomonas maltophilia reveals an organism heavily shielded by drug resistance determinants.</title>
        <authorList>
            <person name="Crossman L.C."/>
            <person name="Gould V.C."/>
            <person name="Dow J.M."/>
            <person name="Vernikos G.S."/>
            <person name="Okazaki A."/>
            <person name="Sebaihia M."/>
            <person name="Saunders D."/>
            <person name="Arrowsmith C."/>
            <person name="Carver T."/>
            <person name="Peters N."/>
            <person name="Adlem E."/>
            <person name="Kerhornou A."/>
            <person name="Lord A."/>
            <person name="Murphy L."/>
            <person name="Seeger K."/>
            <person name="Squares R."/>
            <person name="Rutter S."/>
            <person name="Quail M.A."/>
            <person name="Rajandream M.A."/>
            <person name="Harris D."/>
            <person name="Churcher C."/>
            <person name="Bentley S.D."/>
            <person name="Parkhill J."/>
            <person name="Thomson N.R."/>
            <person name="Avison M.B."/>
        </authorList>
    </citation>
    <scope>NUCLEOTIDE SEQUENCE [LARGE SCALE GENOMIC DNA]</scope>
    <source>
        <strain>K279a</strain>
    </source>
</reference>
<proteinExistence type="inferred from homology"/>
<organism>
    <name type="scientific">Stenotrophomonas maltophilia (strain K279a)</name>
    <dbReference type="NCBI Taxonomy" id="522373"/>
    <lineage>
        <taxon>Bacteria</taxon>
        <taxon>Pseudomonadati</taxon>
        <taxon>Pseudomonadota</taxon>
        <taxon>Gammaproteobacteria</taxon>
        <taxon>Lysobacterales</taxon>
        <taxon>Lysobacteraceae</taxon>
        <taxon>Stenotrophomonas</taxon>
        <taxon>Stenotrophomonas maltophilia group</taxon>
    </lineage>
</organism>
<dbReference type="EC" id="6.1.1.12" evidence="1"/>
<dbReference type="EMBL" id="AM743169">
    <property type="protein sequence ID" value="CAQ47131.1"/>
    <property type="molecule type" value="Genomic_DNA"/>
</dbReference>
<dbReference type="RefSeq" id="WP_005414279.1">
    <property type="nucleotide sequence ID" value="NC_010943.1"/>
</dbReference>
<dbReference type="SMR" id="B2FRP1"/>
<dbReference type="EnsemblBacteria" id="CAQ47131">
    <property type="protein sequence ID" value="CAQ47131"/>
    <property type="gene ID" value="Smlt3718"/>
</dbReference>
<dbReference type="GeneID" id="93834708"/>
<dbReference type="KEGG" id="sml:Smlt3718"/>
<dbReference type="PATRIC" id="fig|522373.3.peg.3498"/>
<dbReference type="eggNOG" id="COG0173">
    <property type="taxonomic scope" value="Bacteria"/>
</dbReference>
<dbReference type="HOGENOM" id="CLU_014330_3_2_6"/>
<dbReference type="Proteomes" id="UP000008840">
    <property type="component" value="Chromosome"/>
</dbReference>
<dbReference type="GO" id="GO:0005737">
    <property type="term" value="C:cytoplasm"/>
    <property type="evidence" value="ECO:0007669"/>
    <property type="project" value="UniProtKB-SubCell"/>
</dbReference>
<dbReference type="GO" id="GO:0004815">
    <property type="term" value="F:aspartate-tRNA ligase activity"/>
    <property type="evidence" value="ECO:0007669"/>
    <property type="project" value="UniProtKB-UniRule"/>
</dbReference>
<dbReference type="GO" id="GO:0005524">
    <property type="term" value="F:ATP binding"/>
    <property type="evidence" value="ECO:0007669"/>
    <property type="project" value="UniProtKB-UniRule"/>
</dbReference>
<dbReference type="GO" id="GO:0003676">
    <property type="term" value="F:nucleic acid binding"/>
    <property type="evidence" value="ECO:0007669"/>
    <property type="project" value="InterPro"/>
</dbReference>
<dbReference type="GO" id="GO:0006422">
    <property type="term" value="P:aspartyl-tRNA aminoacylation"/>
    <property type="evidence" value="ECO:0007669"/>
    <property type="project" value="UniProtKB-UniRule"/>
</dbReference>
<dbReference type="CDD" id="cd00777">
    <property type="entry name" value="AspRS_core"/>
    <property type="match status" value="1"/>
</dbReference>
<dbReference type="CDD" id="cd04317">
    <property type="entry name" value="EcAspRS_like_N"/>
    <property type="match status" value="1"/>
</dbReference>
<dbReference type="Gene3D" id="3.30.930.10">
    <property type="entry name" value="Bira Bifunctional Protein, Domain 2"/>
    <property type="match status" value="1"/>
</dbReference>
<dbReference type="Gene3D" id="3.30.1360.30">
    <property type="entry name" value="GAD-like domain"/>
    <property type="match status" value="1"/>
</dbReference>
<dbReference type="Gene3D" id="2.40.50.140">
    <property type="entry name" value="Nucleic acid-binding proteins"/>
    <property type="match status" value="1"/>
</dbReference>
<dbReference type="HAMAP" id="MF_00044">
    <property type="entry name" value="Asp_tRNA_synth_type1"/>
    <property type="match status" value="1"/>
</dbReference>
<dbReference type="InterPro" id="IPR004364">
    <property type="entry name" value="Aa-tRNA-synt_II"/>
</dbReference>
<dbReference type="InterPro" id="IPR006195">
    <property type="entry name" value="aa-tRNA-synth_II"/>
</dbReference>
<dbReference type="InterPro" id="IPR045864">
    <property type="entry name" value="aa-tRNA-synth_II/BPL/LPL"/>
</dbReference>
<dbReference type="InterPro" id="IPR004524">
    <property type="entry name" value="Asp-tRNA-ligase_1"/>
</dbReference>
<dbReference type="InterPro" id="IPR047089">
    <property type="entry name" value="Asp-tRNA-ligase_1_N"/>
</dbReference>
<dbReference type="InterPro" id="IPR002312">
    <property type="entry name" value="Asp/Asn-tRNA-synth_IIb"/>
</dbReference>
<dbReference type="InterPro" id="IPR047090">
    <property type="entry name" value="AspRS_core"/>
</dbReference>
<dbReference type="InterPro" id="IPR004115">
    <property type="entry name" value="GAD-like_sf"/>
</dbReference>
<dbReference type="InterPro" id="IPR029351">
    <property type="entry name" value="GAD_dom"/>
</dbReference>
<dbReference type="InterPro" id="IPR012340">
    <property type="entry name" value="NA-bd_OB-fold"/>
</dbReference>
<dbReference type="InterPro" id="IPR004365">
    <property type="entry name" value="NA-bd_OB_tRNA"/>
</dbReference>
<dbReference type="NCBIfam" id="TIGR00459">
    <property type="entry name" value="aspS_bact"/>
    <property type="match status" value="1"/>
</dbReference>
<dbReference type="NCBIfam" id="NF001750">
    <property type="entry name" value="PRK00476.1"/>
    <property type="match status" value="1"/>
</dbReference>
<dbReference type="PANTHER" id="PTHR22594:SF5">
    <property type="entry name" value="ASPARTATE--TRNA LIGASE, MITOCHONDRIAL"/>
    <property type="match status" value="1"/>
</dbReference>
<dbReference type="PANTHER" id="PTHR22594">
    <property type="entry name" value="ASPARTYL/LYSYL-TRNA SYNTHETASE"/>
    <property type="match status" value="1"/>
</dbReference>
<dbReference type="Pfam" id="PF02938">
    <property type="entry name" value="GAD"/>
    <property type="match status" value="1"/>
</dbReference>
<dbReference type="Pfam" id="PF00152">
    <property type="entry name" value="tRNA-synt_2"/>
    <property type="match status" value="1"/>
</dbReference>
<dbReference type="Pfam" id="PF01336">
    <property type="entry name" value="tRNA_anti-codon"/>
    <property type="match status" value="1"/>
</dbReference>
<dbReference type="PRINTS" id="PR01042">
    <property type="entry name" value="TRNASYNTHASP"/>
</dbReference>
<dbReference type="SUPFAM" id="SSF55681">
    <property type="entry name" value="Class II aaRS and biotin synthetases"/>
    <property type="match status" value="1"/>
</dbReference>
<dbReference type="SUPFAM" id="SSF55261">
    <property type="entry name" value="GAD domain-like"/>
    <property type="match status" value="1"/>
</dbReference>
<dbReference type="SUPFAM" id="SSF50249">
    <property type="entry name" value="Nucleic acid-binding proteins"/>
    <property type="match status" value="1"/>
</dbReference>
<dbReference type="PROSITE" id="PS50862">
    <property type="entry name" value="AA_TRNA_LIGASE_II"/>
    <property type="match status" value="1"/>
</dbReference>
<gene>
    <name evidence="1" type="primary">aspS</name>
    <name type="ordered locus">Smlt3718</name>
</gene>